<organism>
    <name type="scientific">Conus abbreviatus</name>
    <name type="common">Abbreviated cone</name>
    <name type="synonym">Miliariconus abbreviatus</name>
    <dbReference type="NCBI Taxonomy" id="100123"/>
    <lineage>
        <taxon>Eukaryota</taxon>
        <taxon>Metazoa</taxon>
        <taxon>Spiralia</taxon>
        <taxon>Lophotrochozoa</taxon>
        <taxon>Mollusca</taxon>
        <taxon>Gastropoda</taxon>
        <taxon>Caenogastropoda</taxon>
        <taxon>Neogastropoda</taxon>
        <taxon>Conoidea</taxon>
        <taxon>Conidae</taxon>
        <taxon>Conus</taxon>
        <taxon>Virroconus</taxon>
    </lineage>
</organism>
<sequence>VLIIAVLFLTACQLTTAETSSRGKQKHRALRSTDKDSRMTKRCTPAGDACDATTKCCIPFCNLATKKCQVPTFP</sequence>
<evidence type="ECO:0000250" key="1"/>
<evidence type="ECO:0000255" key="2"/>
<evidence type="ECO:0000256" key="3">
    <source>
        <dbReference type="SAM" id="MobiDB-lite"/>
    </source>
</evidence>
<evidence type="ECO:0000305" key="4"/>
<protein>
    <recommendedName>
        <fullName>Conotoxin AbVIH</fullName>
    </recommendedName>
</protein>
<feature type="signal peptide" evidence="2">
    <location>
        <begin position="1" status="less than"/>
        <end position="17"/>
    </location>
</feature>
<feature type="propeptide" id="PRO_0000392124" evidence="1">
    <location>
        <begin position="18"/>
        <end position="40"/>
    </location>
</feature>
<feature type="peptide" id="PRO_0000392125" description="Conotoxin AbVIH">
    <location>
        <begin position="43"/>
        <end position="74"/>
    </location>
</feature>
<feature type="region of interest" description="Disordered" evidence="3">
    <location>
        <begin position="19"/>
        <end position="40"/>
    </location>
</feature>
<feature type="disulfide bond" evidence="1">
    <location>
        <begin position="43"/>
        <end position="57"/>
    </location>
</feature>
<feature type="disulfide bond" evidence="1">
    <location>
        <begin position="50"/>
        <end position="61"/>
    </location>
</feature>
<feature type="disulfide bond" evidence="1">
    <location>
        <begin position="56"/>
        <end position="68"/>
    </location>
</feature>
<feature type="non-terminal residue">
    <location>
        <position position="1"/>
    </location>
</feature>
<keyword id="KW-0165">Cleavage on pair of basic residues</keyword>
<keyword id="KW-1015">Disulfide bond</keyword>
<keyword id="KW-0960">Knottin</keyword>
<keyword id="KW-0964">Secreted</keyword>
<keyword id="KW-0732">Signal</keyword>
<keyword id="KW-0800">Toxin</keyword>
<dbReference type="EMBL" id="AF089983">
    <property type="protein sequence ID" value="AAD48238.1"/>
    <property type="molecule type" value="mRNA"/>
</dbReference>
<dbReference type="ConoServer" id="960">
    <property type="toxin name" value="ABVIH precursor"/>
</dbReference>
<dbReference type="GO" id="GO:0005576">
    <property type="term" value="C:extracellular region"/>
    <property type="evidence" value="ECO:0007669"/>
    <property type="project" value="UniProtKB-SubCell"/>
</dbReference>
<dbReference type="GO" id="GO:0008200">
    <property type="term" value="F:ion channel inhibitor activity"/>
    <property type="evidence" value="ECO:0007669"/>
    <property type="project" value="InterPro"/>
</dbReference>
<dbReference type="GO" id="GO:0090729">
    <property type="term" value="F:toxin activity"/>
    <property type="evidence" value="ECO:0007669"/>
    <property type="project" value="UniProtKB-KW"/>
</dbReference>
<dbReference type="InterPro" id="IPR004214">
    <property type="entry name" value="Conotoxin"/>
</dbReference>
<dbReference type="Pfam" id="PF02950">
    <property type="entry name" value="Conotoxin"/>
    <property type="match status" value="1"/>
</dbReference>
<accession>Q9UA95</accession>
<proteinExistence type="evidence at transcript level"/>
<name>O16H_CONAB</name>
<reference key="1">
    <citation type="journal article" date="1999" name="Proc. Natl. Acad. Sci. U.S.A.">
        <title>Molecular genetics of ecological diversification: duplication and rapid evolution of toxin genes of the venomous gastropod Conus.</title>
        <authorList>
            <person name="Duda T.F. Jr."/>
            <person name="Palumbi S.R."/>
        </authorList>
    </citation>
    <scope>NUCLEOTIDE SEQUENCE [MRNA]</scope>
    <source>
        <tissue>Venom duct</tissue>
    </source>
</reference>
<reference key="2">
    <citation type="journal article" date="2004" name="Proc. R. Soc. B">
        <title>Gene expression and feeding ecology: evolution of piscivory in the venomous gastropod genus Conus.</title>
        <authorList>
            <person name="Duda T.F. Jr."/>
            <person name="Palumbi S.R."/>
        </authorList>
    </citation>
    <scope>NUCLEOTIDE SEQUENCE [MRNA]</scope>
    <source>
        <tissue>Venom duct</tissue>
    </source>
</reference>
<comment type="subcellular location">
    <subcellularLocation>
        <location evidence="1">Secreted</location>
    </subcellularLocation>
</comment>
<comment type="tissue specificity">
    <text>Expressed by the venom duct.</text>
</comment>
<comment type="domain">
    <text evidence="1">The presence of a 'disulfide through disulfide knot' structurally defines this protein as a knottin.</text>
</comment>
<comment type="domain">
    <text>The cysteine framework is VI/VII (C-C-CC-C-C).</text>
</comment>
<comment type="similarity">
    <text evidence="4">Belongs to the conotoxin O1 superfamily.</text>
</comment>